<evidence type="ECO:0000250" key="1"/>
<evidence type="ECO:0000250" key="2">
    <source>
        <dbReference type="UniProtKB" id="P41208"/>
    </source>
</evidence>
<evidence type="ECO:0000255" key="3">
    <source>
        <dbReference type="PROSITE-ProRule" id="PRU00448"/>
    </source>
</evidence>
<evidence type="ECO:0000256" key="4">
    <source>
        <dbReference type="SAM" id="MobiDB-lite"/>
    </source>
</evidence>
<evidence type="ECO:0000269" key="5">
    <source>
    </source>
</evidence>
<evidence type="ECO:0000305" key="6"/>
<evidence type="ECO:0007744" key="7">
    <source>
    </source>
</evidence>
<reference key="1">
    <citation type="journal article" date="2001" name="Gene">
        <title>Characterization of the X-linked murine centrin Cetn2 gene.</title>
        <authorList>
            <person name="Hart P.E."/>
            <person name="Poynter G.M."/>
            <person name="Whitehead C.M."/>
            <person name="Orth J.D."/>
            <person name="Glantz J.N."/>
            <person name="Busby R.C."/>
            <person name="Barrett S.L."/>
            <person name="Salisbury J.L."/>
        </authorList>
    </citation>
    <scope>NUCLEOTIDE SEQUENCE [GENOMIC DNA]</scope>
    <scope>SUBCELLULAR LOCATION</scope>
    <scope>TISSUE SPECIFICITY</scope>
    <source>
        <strain>129/Ola</strain>
    </source>
</reference>
<reference key="2">
    <citation type="journal article" date="2000" name="Genome Res.">
        <title>Comparative genome sequence analysis of the Bpa/Str region in mouse and man.</title>
        <authorList>
            <person name="Mallon A.-M."/>
            <person name="Platzer M."/>
            <person name="Bate R."/>
            <person name="Gloeckner G."/>
            <person name="Botcherby M.R.M."/>
            <person name="Nordsiek G."/>
            <person name="Strivens M.A."/>
            <person name="Kioschis P."/>
            <person name="Dangel A."/>
            <person name="Cunningham D."/>
            <person name="Straw R.N.A."/>
            <person name="Weston P."/>
            <person name="Gilbert M."/>
            <person name="Fernando S."/>
            <person name="Goodall K."/>
            <person name="Hunter G."/>
            <person name="Greystrong J.S."/>
            <person name="Clarke D."/>
            <person name="Kimberley C."/>
            <person name="Goerdes M."/>
            <person name="Blechschmidt K."/>
            <person name="Rump A."/>
            <person name="Hinzmann B."/>
            <person name="Mundy C.R."/>
            <person name="Miller W."/>
            <person name="Poustka A."/>
            <person name="Herman G.E."/>
            <person name="Rhodes M."/>
            <person name="Denny P."/>
            <person name="Rosenthal A."/>
            <person name="Brown S.D.M."/>
        </authorList>
    </citation>
    <scope>NUCLEOTIDE SEQUENCE [LARGE SCALE GENOMIC DNA]</scope>
    <source>
        <strain>C57BL/6J</strain>
    </source>
</reference>
<reference key="3">
    <citation type="journal article" date="2005" name="Science">
        <title>The transcriptional landscape of the mammalian genome.</title>
        <authorList>
            <person name="Carninci P."/>
            <person name="Kasukawa T."/>
            <person name="Katayama S."/>
            <person name="Gough J."/>
            <person name="Frith M.C."/>
            <person name="Maeda N."/>
            <person name="Oyama R."/>
            <person name="Ravasi T."/>
            <person name="Lenhard B."/>
            <person name="Wells C."/>
            <person name="Kodzius R."/>
            <person name="Shimokawa K."/>
            <person name="Bajic V.B."/>
            <person name="Brenner S.E."/>
            <person name="Batalov S."/>
            <person name="Forrest A.R."/>
            <person name="Zavolan M."/>
            <person name="Davis M.J."/>
            <person name="Wilming L.G."/>
            <person name="Aidinis V."/>
            <person name="Allen J.E."/>
            <person name="Ambesi-Impiombato A."/>
            <person name="Apweiler R."/>
            <person name="Aturaliya R.N."/>
            <person name="Bailey T.L."/>
            <person name="Bansal M."/>
            <person name="Baxter L."/>
            <person name="Beisel K.W."/>
            <person name="Bersano T."/>
            <person name="Bono H."/>
            <person name="Chalk A.M."/>
            <person name="Chiu K.P."/>
            <person name="Choudhary V."/>
            <person name="Christoffels A."/>
            <person name="Clutterbuck D.R."/>
            <person name="Crowe M.L."/>
            <person name="Dalla E."/>
            <person name="Dalrymple B.P."/>
            <person name="de Bono B."/>
            <person name="Della Gatta G."/>
            <person name="di Bernardo D."/>
            <person name="Down T."/>
            <person name="Engstrom P."/>
            <person name="Fagiolini M."/>
            <person name="Faulkner G."/>
            <person name="Fletcher C.F."/>
            <person name="Fukushima T."/>
            <person name="Furuno M."/>
            <person name="Futaki S."/>
            <person name="Gariboldi M."/>
            <person name="Georgii-Hemming P."/>
            <person name="Gingeras T.R."/>
            <person name="Gojobori T."/>
            <person name="Green R.E."/>
            <person name="Gustincich S."/>
            <person name="Harbers M."/>
            <person name="Hayashi Y."/>
            <person name="Hensch T.K."/>
            <person name="Hirokawa N."/>
            <person name="Hill D."/>
            <person name="Huminiecki L."/>
            <person name="Iacono M."/>
            <person name="Ikeo K."/>
            <person name="Iwama A."/>
            <person name="Ishikawa T."/>
            <person name="Jakt M."/>
            <person name="Kanapin A."/>
            <person name="Katoh M."/>
            <person name="Kawasawa Y."/>
            <person name="Kelso J."/>
            <person name="Kitamura H."/>
            <person name="Kitano H."/>
            <person name="Kollias G."/>
            <person name="Krishnan S.P."/>
            <person name="Kruger A."/>
            <person name="Kummerfeld S.K."/>
            <person name="Kurochkin I.V."/>
            <person name="Lareau L.F."/>
            <person name="Lazarevic D."/>
            <person name="Lipovich L."/>
            <person name="Liu J."/>
            <person name="Liuni S."/>
            <person name="McWilliam S."/>
            <person name="Madan Babu M."/>
            <person name="Madera M."/>
            <person name="Marchionni L."/>
            <person name="Matsuda H."/>
            <person name="Matsuzawa S."/>
            <person name="Miki H."/>
            <person name="Mignone F."/>
            <person name="Miyake S."/>
            <person name="Morris K."/>
            <person name="Mottagui-Tabar S."/>
            <person name="Mulder N."/>
            <person name="Nakano N."/>
            <person name="Nakauchi H."/>
            <person name="Ng P."/>
            <person name="Nilsson R."/>
            <person name="Nishiguchi S."/>
            <person name="Nishikawa S."/>
            <person name="Nori F."/>
            <person name="Ohara O."/>
            <person name="Okazaki Y."/>
            <person name="Orlando V."/>
            <person name="Pang K.C."/>
            <person name="Pavan W.J."/>
            <person name="Pavesi G."/>
            <person name="Pesole G."/>
            <person name="Petrovsky N."/>
            <person name="Piazza S."/>
            <person name="Reed J."/>
            <person name="Reid J.F."/>
            <person name="Ring B.Z."/>
            <person name="Ringwald M."/>
            <person name="Rost B."/>
            <person name="Ruan Y."/>
            <person name="Salzberg S.L."/>
            <person name="Sandelin A."/>
            <person name="Schneider C."/>
            <person name="Schoenbach C."/>
            <person name="Sekiguchi K."/>
            <person name="Semple C.A."/>
            <person name="Seno S."/>
            <person name="Sessa L."/>
            <person name="Sheng Y."/>
            <person name="Shibata Y."/>
            <person name="Shimada H."/>
            <person name="Shimada K."/>
            <person name="Silva D."/>
            <person name="Sinclair B."/>
            <person name="Sperling S."/>
            <person name="Stupka E."/>
            <person name="Sugiura K."/>
            <person name="Sultana R."/>
            <person name="Takenaka Y."/>
            <person name="Taki K."/>
            <person name="Tammoja K."/>
            <person name="Tan S.L."/>
            <person name="Tang S."/>
            <person name="Taylor M.S."/>
            <person name="Tegner J."/>
            <person name="Teichmann S.A."/>
            <person name="Ueda H.R."/>
            <person name="van Nimwegen E."/>
            <person name="Verardo R."/>
            <person name="Wei C.L."/>
            <person name="Yagi K."/>
            <person name="Yamanishi H."/>
            <person name="Zabarovsky E."/>
            <person name="Zhu S."/>
            <person name="Zimmer A."/>
            <person name="Hide W."/>
            <person name="Bult C."/>
            <person name="Grimmond S.M."/>
            <person name="Teasdale R.D."/>
            <person name="Liu E.T."/>
            <person name="Brusic V."/>
            <person name="Quackenbush J."/>
            <person name="Wahlestedt C."/>
            <person name="Mattick J.S."/>
            <person name="Hume D.A."/>
            <person name="Kai C."/>
            <person name="Sasaki D."/>
            <person name="Tomaru Y."/>
            <person name="Fukuda S."/>
            <person name="Kanamori-Katayama M."/>
            <person name="Suzuki M."/>
            <person name="Aoki J."/>
            <person name="Arakawa T."/>
            <person name="Iida J."/>
            <person name="Imamura K."/>
            <person name="Itoh M."/>
            <person name="Kato T."/>
            <person name="Kawaji H."/>
            <person name="Kawagashira N."/>
            <person name="Kawashima T."/>
            <person name="Kojima M."/>
            <person name="Kondo S."/>
            <person name="Konno H."/>
            <person name="Nakano K."/>
            <person name="Ninomiya N."/>
            <person name="Nishio T."/>
            <person name="Okada M."/>
            <person name="Plessy C."/>
            <person name="Shibata K."/>
            <person name="Shiraki T."/>
            <person name="Suzuki S."/>
            <person name="Tagami M."/>
            <person name="Waki K."/>
            <person name="Watahiki A."/>
            <person name="Okamura-Oho Y."/>
            <person name="Suzuki H."/>
            <person name="Kawai J."/>
            <person name="Hayashizaki Y."/>
        </authorList>
    </citation>
    <scope>NUCLEOTIDE SEQUENCE [LARGE SCALE MRNA]</scope>
    <source>
        <strain>C57BL/6J</strain>
        <tissue>Bone marrow</tissue>
        <tissue>Corpora quadrigemina</tissue>
        <tissue>Embryo</tissue>
    </source>
</reference>
<reference key="4">
    <citation type="journal article" date="2009" name="PLoS Biol.">
        <title>Lineage-specific biology revealed by a finished genome assembly of the mouse.</title>
        <authorList>
            <person name="Church D.M."/>
            <person name="Goodstadt L."/>
            <person name="Hillier L.W."/>
            <person name="Zody M.C."/>
            <person name="Goldstein S."/>
            <person name="She X."/>
            <person name="Bult C.J."/>
            <person name="Agarwala R."/>
            <person name="Cherry J.L."/>
            <person name="DiCuccio M."/>
            <person name="Hlavina W."/>
            <person name="Kapustin Y."/>
            <person name="Meric P."/>
            <person name="Maglott D."/>
            <person name="Birtle Z."/>
            <person name="Marques A.C."/>
            <person name="Graves T."/>
            <person name="Zhou S."/>
            <person name="Teague B."/>
            <person name="Potamousis K."/>
            <person name="Churas C."/>
            <person name="Place M."/>
            <person name="Herschleb J."/>
            <person name="Runnheim R."/>
            <person name="Forrest D."/>
            <person name="Amos-Landgraf J."/>
            <person name="Schwartz D.C."/>
            <person name="Cheng Z."/>
            <person name="Lindblad-Toh K."/>
            <person name="Eichler E.E."/>
            <person name="Ponting C.P."/>
        </authorList>
    </citation>
    <scope>NUCLEOTIDE SEQUENCE [LARGE SCALE GENOMIC DNA]</scope>
    <source>
        <strain>C57BL/6J</strain>
    </source>
</reference>
<reference key="5">
    <citation type="submission" date="2005-09" db="EMBL/GenBank/DDBJ databases">
        <authorList>
            <person name="Mural R.J."/>
            <person name="Adams M.D."/>
            <person name="Myers E.W."/>
            <person name="Smith H.O."/>
            <person name="Venter J.C."/>
        </authorList>
    </citation>
    <scope>NUCLEOTIDE SEQUENCE [LARGE SCALE GENOMIC DNA]</scope>
</reference>
<reference key="6">
    <citation type="journal article" date="2004" name="Genome Res.">
        <title>The status, quality, and expansion of the NIH full-length cDNA project: the Mammalian Gene Collection (MGC).</title>
        <authorList>
            <consortium name="The MGC Project Team"/>
        </authorList>
    </citation>
    <scope>NUCLEOTIDE SEQUENCE [LARGE SCALE MRNA]</scope>
    <source>
        <tissue>Kidney</tissue>
    </source>
</reference>
<reference key="7">
    <citation type="journal article" date="2010" name="Cell">
        <title>A tissue-specific atlas of mouse protein phosphorylation and expression.</title>
        <authorList>
            <person name="Huttlin E.L."/>
            <person name="Jedrychowski M.P."/>
            <person name="Elias J.E."/>
            <person name="Goswami T."/>
            <person name="Rad R."/>
            <person name="Beausoleil S.A."/>
            <person name="Villen J."/>
            <person name="Haas W."/>
            <person name="Sowa M.E."/>
            <person name="Gygi S.P."/>
        </authorList>
    </citation>
    <scope>PHOSPHORYLATION [LARGE SCALE ANALYSIS] AT SER-20</scope>
    <scope>IDENTIFICATION BY MASS SPECTROMETRY [LARGE SCALE ANALYSIS]</scope>
    <source>
        <tissue>Brain</tissue>
        <tissue>Kidney</tissue>
        <tissue>Liver</tissue>
        <tissue>Lung</tissue>
        <tissue>Spleen</tissue>
    </source>
</reference>
<dbReference type="EMBL" id="AF080592">
    <property type="protein sequence ID" value="AAD46391.1"/>
    <property type="molecule type" value="Genomic_DNA"/>
</dbReference>
<dbReference type="EMBL" id="AL021127">
    <property type="protein sequence ID" value="CAB88169.1"/>
    <property type="molecule type" value="Genomic_DNA"/>
</dbReference>
<dbReference type="EMBL" id="AK004081">
    <property type="protein sequence ID" value="BAB23161.1"/>
    <property type="molecule type" value="mRNA"/>
</dbReference>
<dbReference type="EMBL" id="AK010541">
    <property type="protein sequence ID" value="BAB27017.1"/>
    <property type="molecule type" value="mRNA"/>
</dbReference>
<dbReference type="EMBL" id="AK140156">
    <property type="protein sequence ID" value="BAE24259.1"/>
    <property type="molecule type" value="mRNA"/>
</dbReference>
<dbReference type="EMBL" id="AK151033">
    <property type="protein sequence ID" value="BAE30050.1"/>
    <property type="molecule type" value="mRNA"/>
</dbReference>
<dbReference type="EMBL" id="AL671908">
    <property type="protein sequence ID" value="CAM20357.1"/>
    <property type="status" value="ALT_SEQ"/>
    <property type="molecule type" value="Genomic_DNA"/>
</dbReference>
<dbReference type="EMBL" id="AL671908">
    <property type="protein sequence ID" value="CAM20359.1"/>
    <property type="molecule type" value="Genomic_DNA"/>
</dbReference>
<dbReference type="EMBL" id="CH466624">
    <property type="protein sequence ID" value="EDL26558.1"/>
    <property type="molecule type" value="Genomic_DNA"/>
</dbReference>
<dbReference type="EMBL" id="BC013545">
    <property type="protein sequence ID" value="AAH13545.1"/>
    <property type="molecule type" value="mRNA"/>
</dbReference>
<dbReference type="CCDS" id="CCDS41003.1"/>
<dbReference type="RefSeq" id="NP_062278.2">
    <property type="nucleotide sequence ID" value="NM_019405.6"/>
</dbReference>
<dbReference type="SMR" id="Q9R1K9"/>
<dbReference type="BioGRID" id="204930">
    <property type="interactions" value="35"/>
</dbReference>
<dbReference type="FunCoup" id="Q9R1K9">
    <property type="interactions" value="547"/>
</dbReference>
<dbReference type="IntAct" id="Q9R1K9">
    <property type="interactions" value="32"/>
</dbReference>
<dbReference type="MINT" id="Q9R1K9"/>
<dbReference type="STRING" id="10090.ENSMUSP00000110198"/>
<dbReference type="iPTMnet" id="Q9R1K9"/>
<dbReference type="PhosphoSitePlus" id="Q9R1K9"/>
<dbReference type="jPOST" id="Q9R1K9"/>
<dbReference type="PaxDb" id="10090-ENSMUSP00000110198"/>
<dbReference type="PeptideAtlas" id="Q9R1K9"/>
<dbReference type="ProteomicsDB" id="281199"/>
<dbReference type="Pumba" id="Q9R1K9"/>
<dbReference type="Antibodypedia" id="30770">
    <property type="antibodies" value="194 antibodies from 29 providers"/>
</dbReference>
<dbReference type="DNASU" id="26370"/>
<dbReference type="Ensembl" id="ENSMUST00000114551.10">
    <property type="protein sequence ID" value="ENSMUSP00000110198.4"/>
    <property type="gene ID" value="ENSMUSG00000031347.13"/>
</dbReference>
<dbReference type="GeneID" id="26370"/>
<dbReference type="KEGG" id="mmu:26370"/>
<dbReference type="UCSC" id="uc009tkt.1">
    <property type="organism name" value="mouse"/>
</dbReference>
<dbReference type="AGR" id="MGI:1347085"/>
<dbReference type="CTD" id="1069"/>
<dbReference type="MGI" id="MGI:1347085">
    <property type="gene designation" value="Cetn2"/>
</dbReference>
<dbReference type="VEuPathDB" id="HostDB:ENSMUSG00000031347"/>
<dbReference type="eggNOG" id="KOG0028">
    <property type="taxonomic scope" value="Eukaryota"/>
</dbReference>
<dbReference type="GeneTree" id="ENSGT00940000155935"/>
<dbReference type="InParanoid" id="Q9R1K9"/>
<dbReference type="OMA" id="HPGLTQQ"/>
<dbReference type="OrthoDB" id="343296at2759"/>
<dbReference type="PhylomeDB" id="Q9R1K9"/>
<dbReference type="TreeFam" id="TF101141"/>
<dbReference type="Reactome" id="R-MMU-2565942">
    <property type="pathway name" value="Regulation of PLK1 Activity at G2/M Transition"/>
</dbReference>
<dbReference type="Reactome" id="R-MMU-3108214">
    <property type="pathway name" value="SUMOylation of DNA damage response and repair proteins"/>
</dbReference>
<dbReference type="Reactome" id="R-MMU-380259">
    <property type="pathway name" value="Loss of Nlp from mitotic centrosomes"/>
</dbReference>
<dbReference type="Reactome" id="R-MMU-380270">
    <property type="pathway name" value="Recruitment of mitotic centrosome proteins and complexes"/>
</dbReference>
<dbReference type="Reactome" id="R-MMU-380284">
    <property type="pathway name" value="Loss of proteins required for interphase microtubule organization from the centrosome"/>
</dbReference>
<dbReference type="Reactome" id="R-MMU-380320">
    <property type="pathway name" value="Recruitment of NuMA to mitotic centrosomes"/>
</dbReference>
<dbReference type="Reactome" id="R-MMU-5620912">
    <property type="pathway name" value="Anchoring of the basal body to the plasma membrane"/>
</dbReference>
<dbReference type="Reactome" id="R-MMU-5696394">
    <property type="pathway name" value="DNA Damage Recognition in GG-NER"/>
</dbReference>
<dbReference type="Reactome" id="R-MMU-5696395">
    <property type="pathway name" value="Formation of Incision Complex in GG-NER"/>
</dbReference>
<dbReference type="Reactome" id="R-MMU-8854518">
    <property type="pathway name" value="AURKA Activation by TPX2"/>
</dbReference>
<dbReference type="BioGRID-ORCS" id="26370">
    <property type="hits" value="3 hits in 114 CRISPR screens"/>
</dbReference>
<dbReference type="CD-CODE" id="01CA17F3">
    <property type="entry name" value="Centrosome"/>
</dbReference>
<dbReference type="ChiTaRS" id="Cetn2">
    <property type="organism name" value="mouse"/>
</dbReference>
<dbReference type="PRO" id="PR:Q9R1K9"/>
<dbReference type="Proteomes" id="UP000000589">
    <property type="component" value="Chromosome X"/>
</dbReference>
<dbReference type="RNAct" id="Q9R1K9">
    <property type="molecule type" value="protein"/>
</dbReference>
<dbReference type="Bgee" id="ENSMUSG00000031347">
    <property type="expression patterns" value="Expressed in choroid plexus epithelium and 265 other cell types or tissues"/>
</dbReference>
<dbReference type="ExpressionAtlas" id="Q9R1K9">
    <property type="expression patterns" value="baseline and differential"/>
</dbReference>
<dbReference type="GO" id="GO:0097729">
    <property type="term" value="C:9+2 motile cilium"/>
    <property type="evidence" value="ECO:0000314"/>
    <property type="project" value="MGI"/>
</dbReference>
<dbReference type="GO" id="GO:0045177">
    <property type="term" value="C:apical part of cell"/>
    <property type="evidence" value="ECO:0000314"/>
    <property type="project" value="MGI"/>
</dbReference>
<dbReference type="GO" id="GO:0005814">
    <property type="term" value="C:centriole"/>
    <property type="evidence" value="ECO:0000314"/>
    <property type="project" value="MGI"/>
</dbReference>
<dbReference type="GO" id="GO:0005813">
    <property type="term" value="C:centrosome"/>
    <property type="evidence" value="ECO:0000314"/>
    <property type="project" value="MGI"/>
</dbReference>
<dbReference type="GO" id="GO:0036064">
    <property type="term" value="C:ciliary basal body"/>
    <property type="evidence" value="ECO:0000314"/>
    <property type="project" value="UniProtKB"/>
</dbReference>
<dbReference type="GO" id="GO:0005929">
    <property type="term" value="C:cilium"/>
    <property type="evidence" value="ECO:0000314"/>
    <property type="project" value="UniProtKB"/>
</dbReference>
<dbReference type="GO" id="GO:0005737">
    <property type="term" value="C:cytoplasm"/>
    <property type="evidence" value="ECO:0007669"/>
    <property type="project" value="UniProtKB-KW"/>
</dbReference>
<dbReference type="GO" id="GO:0097386">
    <property type="term" value="C:glial cell projection"/>
    <property type="evidence" value="ECO:0000314"/>
    <property type="project" value="MGI"/>
</dbReference>
<dbReference type="GO" id="GO:0044615">
    <property type="term" value="C:nuclear pore nuclear basket"/>
    <property type="evidence" value="ECO:0000250"/>
    <property type="project" value="UniProtKB"/>
</dbReference>
<dbReference type="GO" id="GO:0032391">
    <property type="term" value="C:photoreceptor connecting cilium"/>
    <property type="evidence" value="ECO:0000314"/>
    <property type="project" value="MGI"/>
</dbReference>
<dbReference type="GO" id="GO:0070390">
    <property type="term" value="C:transcription export complex 2"/>
    <property type="evidence" value="ECO:0000250"/>
    <property type="project" value="UniProtKB"/>
</dbReference>
<dbReference type="GO" id="GO:0071942">
    <property type="term" value="C:XPC complex"/>
    <property type="evidence" value="ECO:0000250"/>
    <property type="project" value="UniProtKB"/>
</dbReference>
<dbReference type="GO" id="GO:0005509">
    <property type="term" value="F:calcium ion binding"/>
    <property type="evidence" value="ECO:0000304"/>
    <property type="project" value="MGI"/>
</dbReference>
<dbReference type="GO" id="GO:0031683">
    <property type="term" value="F:G-protein beta/gamma-subunit complex binding"/>
    <property type="evidence" value="ECO:0000314"/>
    <property type="project" value="MGI"/>
</dbReference>
<dbReference type="GO" id="GO:0032795">
    <property type="term" value="F:heterotrimeric G-protein binding"/>
    <property type="evidence" value="ECO:0000314"/>
    <property type="project" value="MGI"/>
</dbReference>
<dbReference type="GO" id="GO:0008017">
    <property type="term" value="F:microtubule binding"/>
    <property type="evidence" value="ECO:0000314"/>
    <property type="project" value="MGI"/>
</dbReference>
<dbReference type="GO" id="GO:0051301">
    <property type="term" value="P:cell division"/>
    <property type="evidence" value="ECO:0007669"/>
    <property type="project" value="UniProtKB-KW"/>
</dbReference>
<dbReference type="GO" id="GO:0007099">
    <property type="term" value="P:centriole replication"/>
    <property type="evidence" value="ECO:0007669"/>
    <property type="project" value="Ensembl"/>
</dbReference>
<dbReference type="GO" id="GO:0051028">
    <property type="term" value="P:mRNA transport"/>
    <property type="evidence" value="ECO:0007669"/>
    <property type="project" value="UniProtKB-KW"/>
</dbReference>
<dbReference type="GO" id="GO:0006289">
    <property type="term" value="P:nucleotide-excision repair"/>
    <property type="evidence" value="ECO:0007669"/>
    <property type="project" value="Ensembl"/>
</dbReference>
<dbReference type="GO" id="GO:0015031">
    <property type="term" value="P:protein transport"/>
    <property type="evidence" value="ECO:0007669"/>
    <property type="project" value="UniProtKB-KW"/>
</dbReference>
<dbReference type="GO" id="GO:0032465">
    <property type="term" value="P:regulation of cytokinesis"/>
    <property type="evidence" value="ECO:0007669"/>
    <property type="project" value="Ensembl"/>
</dbReference>
<dbReference type="GO" id="GO:0007283">
    <property type="term" value="P:spermatogenesis"/>
    <property type="evidence" value="ECO:0000270"/>
    <property type="project" value="BHF-UCL"/>
</dbReference>
<dbReference type="CDD" id="cd00051">
    <property type="entry name" value="EFh"/>
    <property type="match status" value="2"/>
</dbReference>
<dbReference type="FunFam" id="1.10.238.10:FF:000077">
    <property type="entry name" value="Centrin 1"/>
    <property type="match status" value="1"/>
</dbReference>
<dbReference type="FunFam" id="1.10.238.10:FF:000070">
    <property type="entry name" value="Centrin-1"/>
    <property type="match status" value="1"/>
</dbReference>
<dbReference type="Gene3D" id="1.10.238.10">
    <property type="entry name" value="EF-hand"/>
    <property type="match status" value="3"/>
</dbReference>
<dbReference type="InterPro" id="IPR050145">
    <property type="entry name" value="Centrin_CML-like"/>
</dbReference>
<dbReference type="InterPro" id="IPR011992">
    <property type="entry name" value="EF-hand-dom_pair"/>
</dbReference>
<dbReference type="InterPro" id="IPR018247">
    <property type="entry name" value="EF_Hand_1_Ca_BS"/>
</dbReference>
<dbReference type="InterPro" id="IPR002048">
    <property type="entry name" value="EF_hand_dom"/>
</dbReference>
<dbReference type="InterPro" id="IPR000629">
    <property type="entry name" value="RNA-helicase_DEAD-box_CS"/>
</dbReference>
<dbReference type="PANTHER" id="PTHR23050">
    <property type="entry name" value="CALCIUM BINDING PROTEIN"/>
    <property type="match status" value="1"/>
</dbReference>
<dbReference type="Pfam" id="PF13499">
    <property type="entry name" value="EF-hand_7"/>
    <property type="match status" value="2"/>
</dbReference>
<dbReference type="SMART" id="SM00054">
    <property type="entry name" value="EFh"/>
    <property type="match status" value="4"/>
</dbReference>
<dbReference type="SUPFAM" id="SSF47473">
    <property type="entry name" value="EF-hand"/>
    <property type="match status" value="1"/>
</dbReference>
<dbReference type="PROSITE" id="PS00018">
    <property type="entry name" value="EF_HAND_1"/>
    <property type="match status" value="2"/>
</dbReference>
<dbReference type="PROSITE" id="PS50222">
    <property type="entry name" value="EF_HAND_2"/>
    <property type="match status" value="4"/>
</dbReference>
<gene>
    <name type="primary">Cetn2</name>
    <name type="synonym">Calt</name>
</gene>
<keyword id="KW-0007">Acetylation</keyword>
<keyword id="KW-0106">Calcium</keyword>
<keyword id="KW-0131">Cell cycle</keyword>
<keyword id="KW-0132">Cell division</keyword>
<keyword id="KW-0963">Cytoplasm</keyword>
<keyword id="KW-0206">Cytoskeleton</keyword>
<keyword id="KW-0227">DNA damage</keyword>
<keyword id="KW-0234">DNA repair</keyword>
<keyword id="KW-1017">Isopeptide bond</keyword>
<keyword id="KW-0479">Metal-binding</keyword>
<keyword id="KW-0498">Mitosis</keyword>
<keyword id="KW-0509">mRNA transport</keyword>
<keyword id="KW-0906">Nuclear pore complex</keyword>
<keyword id="KW-0539">Nucleus</keyword>
<keyword id="KW-0597">Phosphoprotein</keyword>
<keyword id="KW-0653">Protein transport</keyword>
<keyword id="KW-1185">Reference proteome</keyword>
<keyword id="KW-0677">Repeat</keyword>
<keyword id="KW-0811">Translocation</keyword>
<keyword id="KW-0813">Transport</keyword>
<keyword id="KW-0832">Ubl conjugation</keyword>
<proteinExistence type="evidence at protein level"/>
<organism>
    <name type="scientific">Mus musculus</name>
    <name type="common">Mouse</name>
    <dbReference type="NCBI Taxonomy" id="10090"/>
    <lineage>
        <taxon>Eukaryota</taxon>
        <taxon>Metazoa</taxon>
        <taxon>Chordata</taxon>
        <taxon>Craniata</taxon>
        <taxon>Vertebrata</taxon>
        <taxon>Euteleostomi</taxon>
        <taxon>Mammalia</taxon>
        <taxon>Eutheria</taxon>
        <taxon>Euarchontoglires</taxon>
        <taxon>Glires</taxon>
        <taxon>Rodentia</taxon>
        <taxon>Myomorpha</taxon>
        <taxon>Muroidea</taxon>
        <taxon>Muridae</taxon>
        <taxon>Murinae</taxon>
        <taxon>Mus</taxon>
        <taxon>Mus</taxon>
    </lineage>
</organism>
<protein>
    <recommendedName>
        <fullName>Centrin-2</fullName>
    </recommendedName>
    <alternativeName>
        <fullName>Caltractin isoform 1</fullName>
    </alternativeName>
</protein>
<feature type="initiator methionine" description="Removed" evidence="2">
    <location>
        <position position="1"/>
    </location>
</feature>
<feature type="chain" id="PRO_0000073562" description="Centrin-2">
    <location>
        <begin position="2"/>
        <end position="172"/>
    </location>
</feature>
<feature type="domain" description="EF-hand 1" evidence="3">
    <location>
        <begin position="28"/>
        <end position="63"/>
    </location>
</feature>
<feature type="domain" description="EF-hand 2" evidence="3">
    <location>
        <begin position="64"/>
        <end position="99"/>
    </location>
</feature>
<feature type="domain" description="EF-hand 3" evidence="3">
    <location>
        <begin position="101"/>
        <end position="136"/>
    </location>
</feature>
<feature type="domain" description="EF-hand 4" evidence="3">
    <location>
        <begin position="137"/>
        <end position="172"/>
    </location>
</feature>
<feature type="region of interest" description="Disordered" evidence="4">
    <location>
        <begin position="1"/>
        <end position="31"/>
    </location>
</feature>
<feature type="region of interest" description="Required for self-assembly" evidence="1">
    <location>
        <begin position="2"/>
        <end position="25"/>
    </location>
</feature>
<feature type="compositionally biased region" description="Polar residues" evidence="4">
    <location>
        <begin position="1"/>
        <end position="14"/>
    </location>
</feature>
<feature type="binding site" evidence="3">
    <location>
        <position position="41"/>
    </location>
    <ligand>
        <name>Ca(2+)</name>
        <dbReference type="ChEBI" id="CHEBI:29108"/>
        <label>1</label>
    </ligand>
</feature>
<feature type="binding site" evidence="3">
    <location>
        <position position="43"/>
    </location>
    <ligand>
        <name>Ca(2+)</name>
        <dbReference type="ChEBI" id="CHEBI:29108"/>
        <label>1</label>
    </ligand>
</feature>
<feature type="binding site" evidence="3">
    <location>
        <position position="45"/>
    </location>
    <ligand>
        <name>Ca(2+)</name>
        <dbReference type="ChEBI" id="CHEBI:29108"/>
        <label>1</label>
    </ligand>
</feature>
<feature type="binding site" evidence="3">
    <location>
        <position position="47"/>
    </location>
    <ligand>
        <name>Ca(2+)</name>
        <dbReference type="ChEBI" id="CHEBI:29108"/>
        <label>1</label>
    </ligand>
</feature>
<feature type="binding site" evidence="3">
    <location>
        <position position="52"/>
    </location>
    <ligand>
        <name>Ca(2+)</name>
        <dbReference type="ChEBI" id="CHEBI:29108"/>
        <label>1</label>
    </ligand>
</feature>
<feature type="binding site" evidence="3">
    <location>
        <position position="150"/>
    </location>
    <ligand>
        <name>Ca(2+)</name>
        <dbReference type="ChEBI" id="CHEBI:29108"/>
        <label>2</label>
    </ligand>
</feature>
<feature type="binding site" evidence="3">
    <location>
        <position position="152"/>
    </location>
    <ligand>
        <name>Ca(2+)</name>
        <dbReference type="ChEBI" id="CHEBI:29108"/>
        <label>2</label>
    </ligand>
</feature>
<feature type="binding site" evidence="3">
    <location>
        <position position="154"/>
    </location>
    <ligand>
        <name>Ca(2+)</name>
        <dbReference type="ChEBI" id="CHEBI:29108"/>
        <label>2</label>
    </ligand>
</feature>
<feature type="binding site" evidence="3">
    <location>
        <position position="156"/>
    </location>
    <ligand>
        <name>Ca(2+)</name>
        <dbReference type="ChEBI" id="CHEBI:29108"/>
        <label>2</label>
    </ligand>
</feature>
<feature type="binding site" evidence="3">
    <location>
        <position position="161"/>
    </location>
    <ligand>
        <name>Ca(2+)</name>
        <dbReference type="ChEBI" id="CHEBI:29108"/>
        <label>2</label>
    </ligand>
</feature>
<feature type="modified residue" description="N-acetylalanine" evidence="2">
    <location>
        <position position="2"/>
    </location>
</feature>
<feature type="modified residue" description="Phosphoserine" evidence="7">
    <location>
        <position position="20"/>
    </location>
</feature>
<feature type="modified residue" description="Phosphothreonine" evidence="2">
    <location>
        <position position="26"/>
    </location>
</feature>
<feature type="cross-link" description="Glycyl lysine isopeptide (Lys-Gly) (interchain with G-Cter in SUMO2)" evidence="2">
    <location>
        <position position="22"/>
    </location>
</feature>
<feature type="sequence conflict" description="In Ref. 3; BAB27017." evidence="6" ref="3">
    <original>R</original>
    <variation>P</variation>
    <location>
        <position position="34"/>
    </location>
</feature>
<feature type="sequence conflict" description="In Ref. 3; BAB27017." evidence="6" ref="3">
    <original>I</original>
    <variation>N</variation>
    <location>
        <position position="76"/>
    </location>
</feature>
<sequence length="172" mass="19797">MASNFKKTTMASSAQRKRMSPKPELTEDQKQEIREAFDLFDADGTGTIDIKELKVAMRALGFEPKKEEIKKMISEIDKEGTGKMNFSDFLTVMTQKMSEKDTKEEILKAFKLFDDDETGKISFKNLKRVAKELGENLTDEELQEMIDEADRDGDGEVNEQEFLRIMKKTSLY</sequence>
<comment type="function">
    <text evidence="1">Plays a fundamental role in microtubule organizing center structure and function. Required for centriole duplication and correct spindle formation. Has a role in regulating cytokinesis and genome stability via cooperation with CALM1 and CCP110 (By similarity).</text>
</comment>
<comment type="function">
    <text evidence="1">Involved in global genome nucleotide excision repair (GG-NER) by acting as component of the XPC complex. Cooperatively with Rad23b appears to stabilize Xpc. In vitro, stimulates DNA binding of the Xpc:Rad23b dimer (By similarity).</text>
</comment>
<comment type="function">
    <text evidence="1">The XPC complex is proposed to represent the first factor bound at the sites of DNA damage and together with other core recognition factors, Xpa, RPA and the TFIIH complex, is part of the pre-incision (or initial recognition) complex. The XPC complex recognizes a wide spectrum of damaged DNA characterized by distortions of the DNA helix such as single-stranded loops, mismatched bubbles or single-stranded overhangs. The orientation of XPC complex binding appears to be crucial for inducing a productive NER. XPC complex is proposed to recognize and to interact with unpaired bases on the undamaged DNA strand which is followed by recruitment of the TFIIH complex and subsequent scanning for lesions in the opposite strand in a 5'-to-3' direction by the NER machinery. Cyclobutane pyrimidine dimers (CPDs) which are formed upon UV-induced DNA damage esacpe detection by the XPC complex due to a low degree of structural perurbation. Instead they are detected by the UV-DDB complex which in turn recruits and cooperates with the XPC complex in the respective DNA repair (By similarity).</text>
</comment>
<comment type="function">
    <text evidence="2">As a component of the TREX-2 complex, involved in the export of mRNAs to the cytoplasm through the nuclear pores.</text>
</comment>
<comment type="subunit">
    <text evidence="2">Monomer. Homooligomer. Interacts with CCP110, SFI1. Component of the XPC complex composed of XPC, RAD23B and CETN2 (By similarity). Component of the nuclear pore complex (NPC)-associated TREX-2 complex (transcription and export complex 2), composed of at least GANP, 2 copies of ENY2, PCID2, SEM1/DSS1, and either centrin CETN2 or centrin CETN3. The TREX-2 complex also associates with ALYREF/ALY and with the nucleoporin NUP153 (By similarity). Interacts with USP49 (By similarity). Forms a microtubule-associated complex with POC5, POC1B and FAM161A (By similarity). Interacts with CCDC15 (By similarity).</text>
</comment>
<comment type="subcellular location">
    <subcellularLocation>
        <location evidence="2">Cytoplasm</location>
        <location evidence="2">Cytoskeleton</location>
        <location evidence="2">Microtubule organizing center</location>
        <location evidence="2">Centrosome</location>
    </subcellularLocation>
    <subcellularLocation>
        <location evidence="5">Cytoplasm</location>
        <location evidence="5">Cytoskeleton</location>
        <location evidence="5">Microtubule organizing center</location>
        <location evidence="5">Centrosome</location>
        <location evidence="5">Centriole</location>
    </subcellularLocation>
    <subcellularLocation>
        <location evidence="2">Nucleus</location>
    </subcellularLocation>
    <subcellularLocation>
        <location evidence="2">Nucleus envelope</location>
    </subcellularLocation>
    <subcellularLocation>
        <location evidence="2">Nucleus</location>
        <location evidence="2">Nuclear pore complex</location>
    </subcellularLocation>
    <text evidence="2">Localizes to the inner scaffold in the central region of centrioles and to the distal end of centrioles.</text>
</comment>
<comment type="tissue specificity">
    <text evidence="5">Ubiquitously expressed in all adult tissues tested, with strongest expression in brain, spleen, kidney, small intestine and ovary. Also expressed in the NIH 3T3 fibroblast cell line and peripheral blood lymphocytes.</text>
</comment>
<comment type="miscellaneous">
    <text evidence="1">Binds two moles of calcium per mole of protein.</text>
</comment>
<comment type="similarity">
    <text evidence="6">Belongs to the centrin family.</text>
</comment>
<comment type="sequence caution" evidence="6">
    <conflict type="erroneous gene model prediction">
        <sequence resource="EMBL-CDS" id="CAM20357"/>
    </conflict>
</comment>
<accession>Q9R1K9</accession>
<accession>B1AUQ6</accession>
<accession>B1AUQ8</accession>
<accession>Q3UBB4</accession>
<accession>Q9CWM0</accession>
<name>CETN2_MOUSE</name>